<evidence type="ECO:0000250" key="1">
    <source>
        <dbReference type="UniProtKB" id="P62820"/>
    </source>
</evidence>
<evidence type="ECO:0000250" key="2">
    <source>
        <dbReference type="UniProtKB" id="Q15771"/>
    </source>
</evidence>
<evidence type="ECO:0000250" key="3">
    <source>
        <dbReference type="UniProtKB" id="Q923S9"/>
    </source>
</evidence>
<evidence type="ECO:0000255" key="4"/>
<evidence type="ECO:0000255" key="5">
    <source>
        <dbReference type="PROSITE-ProRule" id="PRU00753"/>
    </source>
</evidence>
<evidence type="ECO:0000305" key="6"/>
<feature type="chain" id="PRO_0000252672" description="Ras-related protein Rab-30">
    <location>
        <begin position="1"/>
        <end position="200"/>
    </location>
</feature>
<feature type="propeptide" id="PRO_0000370825" description="Removed in mature form" evidence="4">
    <location>
        <begin position="201"/>
        <end position="203"/>
    </location>
</feature>
<feature type="region of interest" description="Switch-I" evidence="5">
    <location>
        <begin position="36"/>
        <end position="44"/>
    </location>
</feature>
<feature type="region of interest" description="Switch-II" evidence="5">
    <location>
        <begin position="67"/>
        <end position="83"/>
    </location>
</feature>
<feature type="binding site" evidence="2">
    <location>
        <position position="20"/>
    </location>
    <ligand>
        <name>GTP</name>
        <dbReference type="ChEBI" id="CHEBI:37565"/>
    </ligand>
</feature>
<feature type="binding site" evidence="2">
    <location>
        <position position="21"/>
    </location>
    <ligand>
        <name>GTP</name>
        <dbReference type="ChEBI" id="CHEBI:37565"/>
    </ligand>
</feature>
<feature type="binding site" evidence="2">
    <location>
        <position position="22"/>
    </location>
    <ligand>
        <name>GTP</name>
        <dbReference type="ChEBI" id="CHEBI:37565"/>
    </ligand>
</feature>
<feature type="binding site" evidence="2">
    <location>
        <position position="23"/>
    </location>
    <ligand>
        <name>GTP</name>
        <dbReference type="ChEBI" id="CHEBI:37565"/>
    </ligand>
</feature>
<feature type="binding site" evidence="2">
    <location>
        <position position="23"/>
    </location>
    <ligand>
        <name>Mg(2+)</name>
        <dbReference type="ChEBI" id="CHEBI:18420"/>
    </ligand>
</feature>
<feature type="binding site" evidence="2">
    <location>
        <position position="24"/>
    </location>
    <ligand>
        <name>GTP</name>
        <dbReference type="ChEBI" id="CHEBI:37565"/>
    </ligand>
</feature>
<feature type="binding site" evidence="2">
    <location>
        <position position="41"/>
    </location>
    <ligand>
        <name>GTP</name>
        <dbReference type="ChEBI" id="CHEBI:37565"/>
    </ligand>
</feature>
<feature type="binding site" evidence="2">
    <location>
        <position position="41"/>
    </location>
    <ligand>
        <name>Mg(2+)</name>
        <dbReference type="ChEBI" id="CHEBI:18420"/>
    </ligand>
</feature>
<feature type="binding site" evidence="1">
    <location>
        <position position="64"/>
    </location>
    <ligand>
        <name>Mg(2+)</name>
        <dbReference type="ChEBI" id="CHEBI:18420"/>
    </ligand>
</feature>
<feature type="binding site" evidence="2">
    <location>
        <position position="67"/>
    </location>
    <ligand>
        <name>GTP</name>
        <dbReference type="ChEBI" id="CHEBI:37565"/>
    </ligand>
</feature>
<feature type="binding site" evidence="2">
    <location>
        <position position="122"/>
    </location>
    <ligand>
        <name>GTP</name>
        <dbReference type="ChEBI" id="CHEBI:37565"/>
    </ligand>
</feature>
<feature type="binding site" evidence="2">
    <location>
        <position position="123"/>
    </location>
    <ligand>
        <name>GTP</name>
        <dbReference type="ChEBI" id="CHEBI:37565"/>
    </ligand>
</feature>
<feature type="binding site" evidence="2">
    <location>
        <position position="125"/>
    </location>
    <ligand>
        <name>GTP</name>
        <dbReference type="ChEBI" id="CHEBI:37565"/>
    </ligand>
</feature>
<feature type="binding site" evidence="2">
    <location>
        <position position="153"/>
    </location>
    <ligand>
        <name>GTP</name>
        <dbReference type="ChEBI" id="CHEBI:37565"/>
    </ligand>
</feature>
<feature type="binding site" evidence="2">
    <location>
        <position position="154"/>
    </location>
    <ligand>
        <name>GTP</name>
        <dbReference type="ChEBI" id="CHEBI:37565"/>
    </ligand>
</feature>
<feature type="modified residue" description="Cysteine methyl ester" evidence="4">
    <location>
        <position position="200"/>
    </location>
</feature>
<feature type="lipid moiety-binding region" description="S-geranylgeranyl cysteine" evidence="1">
    <location>
        <position position="199"/>
    </location>
</feature>
<feature type="lipid moiety-binding region" description="S-geranylgeranyl cysteine" evidence="1">
    <location>
        <position position="200"/>
    </location>
</feature>
<sequence>MSMEDYDFLFKIVLIGNAGVGKTCLVRRFTQGLFPPGQGATIGVDFMIKTVEINGEKVKLQIWDTAGQERFRSITQSYYRSANALILTYDITCEESFRCLPEWLREIEQYASNKVITVLVGNKIDLAERREVSQQRAEEFSEAQDMYYLETSAKESDNVEKLFLDLACRLISEARQNTLVNNVSSPLPGEGKSISYLTCCNFN</sequence>
<gene>
    <name type="primary">RAB30</name>
</gene>
<accession>Q17QB7</accession>
<protein>
    <recommendedName>
        <fullName>Ras-related protein Rab-30</fullName>
        <ecNumber evidence="1">3.6.5.2</ecNumber>
    </recommendedName>
</protein>
<keyword id="KW-0963">Cytoplasm</keyword>
<keyword id="KW-0968">Cytoplasmic vesicle</keyword>
<keyword id="KW-0333">Golgi apparatus</keyword>
<keyword id="KW-0342">GTP-binding</keyword>
<keyword id="KW-0378">Hydrolase</keyword>
<keyword id="KW-0449">Lipoprotein</keyword>
<keyword id="KW-0458">Lysosome</keyword>
<keyword id="KW-0460">Magnesium</keyword>
<keyword id="KW-0472">Membrane</keyword>
<keyword id="KW-0479">Metal-binding</keyword>
<keyword id="KW-0488">Methylation</keyword>
<keyword id="KW-0547">Nucleotide-binding</keyword>
<keyword id="KW-0636">Prenylation</keyword>
<keyword id="KW-1185">Reference proteome</keyword>
<comment type="function">
    <text evidence="2 3">The small GTPases Rab are key regulators of intracellular membrane trafficking, from the formation of transport vesicles to their fusion with membranes. Rabs cycle between an inactive GDP-bound form and an active GTP-bound form that is able to recruit to membranes different sets of downstream effectors directly responsible for vesicle formation, movement, tethering and fusion. RAB30 is required for maintaining the structural integrity of the Golgi apparatus, possibly by mediating interactions with cytoplasmic scaffolding proteins (By similarity). Facilitates lipid homeostasis during fasting by regulating hepatic protein and lipid trafficking in a PPAR-alpha-dependent manner (By similarity). Promotes autophagosome biogenesis during bacterial infection such as group A Streptococcus infection (By similarity).</text>
</comment>
<comment type="catalytic activity">
    <reaction evidence="1">
        <text>GTP + H2O = GDP + phosphate + H(+)</text>
        <dbReference type="Rhea" id="RHEA:19669"/>
        <dbReference type="ChEBI" id="CHEBI:15377"/>
        <dbReference type="ChEBI" id="CHEBI:15378"/>
        <dbReference type="ChEBI" id="CHEBI:37565"/>
        <dbReference type="ChEBI" id="CHEBI:43474"/>
        <dbReference type="ChEBI" id="CHEBI:58189"/>
        <dbReference type="EC" id="3.6.5.2"/>
    </reaction>
    <physiologicalReaction direction="left-to-right" evidence="1">
        <dbReference type="Rhea" id="RHEA:19670"/>
    </physiologicalReaction>
</comment>
<comment type="cofactor">
    <cofactor evidence="2">
        <name>Mg(2+)</name>
        <dbReference type="ChEBI" id="CHEBI:18420"/>
    </cofactor>
</comment>
<comment type="activity regulation">
    <text evidence="6">Regulated by guanine nucleotide exchange factors (GEFs) which promote the exchange of bound GDP for free GTP. Regulated by GTPase activating proteins (GAPs) which increase the GTP hydrolysis activity (Probable). Inhibited by GDP dissociation inhibitors (GDIs) (Probable).</text>
</comment>
<comment type="subcellular location">
    <subcellularLocation>
        <location evidence="6">Membrane</location>
        <topology evidence="6">Lipid-anchor</topology>
        <orientation evidence="6">Cytoplasmic side</orientation>
    </subcellularLocation>
    <subcellularLocation>
        <location evidence="2">Golgi apparatus</location>
        <location evidence="2">trans-Golgi network membrane</location>
    </subcellularLocation>
    <subcellularLocation>
        <location evidence="2">Golgi apparatus</location>
        <location evidence="2">cis-Golgi network membrane</location>
    </subcellularLocation>
    <subcellularLocation>
        <location evidence="2">Golgi apparatus membrane</location>
    </subcellularLocation>
    <subcellularLocation>
        <location evidence="2">Cytoplasm</location>
    </subcellularLocation>
    <subcellularLocation>
        <location evidence="2">Cytoplasmic vesicle</location>
        <location evidence="2">Autophagosome membrane</location>
    </subcellularLocation>
    <subcellularLocation>
        <location evidence="2">Autolysosome membrane</location>
    </subcellularLocation>
    <text evidence="2 3">Localized to dynamic membranes fusing to and exiting from the Golgi apparatus (By similarity). Localized to group A Streptococcus (GAS)-containing autophagosome to autolysosome in GAS-infected epithelial cells (By similarity). Also colocalized with a starvation-induced autophagosome although not required for autophagosome formation during starvation (By similarity).</text>
</comment>
<comment type="domain">
    <text evidence="1">Switch I, switch II and the interswitch regions are characteristic of Rab GTPases and mediate the interactions with Rab downstream effectors. The switch regions undergo conformational changes upon nucleotide binding which drive interaction with specific sets of effector proteins, with most effectors only binding to GTP-bound Rab.</text>
</comment>
<comment type="similarity">
    <text evidence="6">Belongs to the small GTPase superfamily. Rab family.</text>
</comment>
<proteinExistence type="evidence at transcript level"/>
<organism>
    <name type="scientific">Bos taurus</name>
    <name type="common">Bovine</name>
    <dbReference type="NCBI Taxonomy" id="9913"/>
    <lineage>
        <taxon>Eukaryota</taxon>
        <taxon>Metazoa</taxon>
        <taxon>Chordata</taxon>
        <taxon>Craniata</taxon>
        <taxon>Vertebrata</taxon>
        <taxon>Euteleostomi</taxon>
        <taxon>Mammalia</taxon>
        <taxon>Eutheria</taxon>
        <taxon>Laurasiatheria</taxon>
        <taxon>Artiodactyla</taxon>
        <taxon>Ruminantia</taxon>
        <taxon>Pecora</taxon>
        <taxon>Bovidae</taxon>
        <taxon>Bovinae</taxon>
        <taxon>Bos</taxon>
    </lineage>
</organism>
<name>RAB30_BOVIN</name>
<reference key="1">
    <citation type="submission" date="2006-06" db="EMBL/GenBank/DDBJ databases">
        <authorList>
            <consortium name="NIH - Mammalian Gene Collection (MGC) project"/>
        </authorList>
    </citation>
    <scope>NUCLEOTIDE SEQUENCE [LARGE SCALE MRNA]</scope>
    <source>
        <strain>Hereford</strain>
        <tissue>Fetal cerebellum</tissue>
    </source>
</reference>
<dbReference type="EC" id="3.6.5.2" evidence="1"/>
<dbReference type="EMBL" id="BC118448">
    <property type="protein sequence ID" value="AAI18449.1"/>
    <property type="molecule type" value="mRNA"/>
</dbReference>
<dbReference type="RefSeq" id="NP_001069697.1">
    <property type="nucleotide sequence ID" value="NM_001076229.2"/>
</dbReference>
<dbReference type="RefSeq" id="XP_005226772.1">
    <property type="nucleotide sequence ID" value="XM_005226715.3"/>
</dbReference>
<dbReference type="RefSeq" id="XP_010819144.1">
    <property type="nucleotide sequence ID" value="XM_010820842.4"/>
</dbReference>
<dbReference type="RefSeq" id="XP_015316622.1">
    <property type="nucleotide sequence ID" value="XM_015461136.1"/>
</dbReference>
<dbReference type="RefSeq" id="XP_024843037.1">
    <property type="nucleotide sequence ID" value="XM_024987269.2"/>
</dbReference>
<dbReference type="RefSeq" id="XP_024843038.1">
    <property type="nucleotide sequence ID" value="XM_024987270.2"/>
</dbReference>
<dbReference type="SMR" id="Q17QB7"/>
<dbReference type="FunCoup" id="Q17QB7">
    <property type="interactions" value="985"/>
</dbReference>
<dbReference type="STRING" id="9913.ENSBTAP00000067338"/>
<dbReference type="PaxDb" id="9913-ENSBTAP00000003135"/>
<dbReference type="Ensembl" id="ENSBTAT00000003135.5">
    <property type="protein sequence ID" value="ENSBTAP00000003135.4"/>
    <property type="gene ID" value="ENSBTAG00000002417.6"/>
</dbReference>
<dbReference type="GeneID" id="540583"/>
<dbReference type="KEGG" id="bta:540583"/>
<dbReference type="CTD" id="27314"/>
<dbReference type="VEuPathDB" id="HostDB:ENSBTAG00000002417"/>
<dbReference type="VGNC" id="VGNC:33639">
    <property type="gene designation" value="RAB30"/>
</dbReference>
<dbReference type="eggNOG" id="KOG0095">
    <property type="taxonomic scope" value="Eukaryota"/>
</dbReference>
<dbReference type="GeneTree" id="ENSGT00940000156875"/>
<dbReference type="HOGENOM" id="CLU_041217_10_1_1"/>
<dbReference type="InParanoid" id="Q17QB7"/>
<dbReference type="OMA" id="VYDVSCQ"/>
<dbReference type="OrthoDB" id="9989112at2759"/>
<dbReference type="TreeFam" id="TF300097"/>
<dbReference type="Reactome" id="R-BTA-6811438">
    <property type="pathway name" value="Intra-Golgi traffic"/>
</dbReference>
<dbReference type="Reactome" id="R-BTA-8873719">
    <property type="pathway name" value="RAB geranylgeranylation"/>
</dbReference>
<dbReference type="Proteomes" id="UP000009136">
    <property type="component" value="Chromosome 29"/>
</dbReference>
<dbReference type="Bgee" id="ENSBTAG00000002417">
    <property type="expression patterns" value="Expressed in cumulus cell and 109 other cell types or tissues"/>
</dbReference>
<dbReference type="GO" id="GO:0005801">
    <property type="term" value="C:cis-Golgi network"/>
    <property type="evidence" value="ECO:0000250"/>
    <property type="project" value="UniProtKB"/>
</dbReference>
<dbReference type="GO" id="GO:0031985">
    <property type="term" value="C:Golgi cisterna"/>
    <property type="evidence" value="ECO:0000250"/>
    <property type="project" value="UniProtKB"/>
</dbReference>
<dbReference type="GO" id="GO:0016020">
    <property type="term" value="C:membrane"/>
    <property type="evidence" value="ECO:0007669"/>
    <property type="project" value="UniProtKB-SubCell"/>
</dbReference>
<dbReference type="GO" id="GO:0005802">
    <property type="term" value="C:trans-Golgi network"/>
    <property type="evidence" value="ECO:0000250"/>
    <property type="project" value="UniProtKB"/>
</dbReference>
<dbReference type="GO" id="GO:0005525">
    <property type="term" value="F:GTP binding"/>
    <property type="evidence" value="ECO:0000318"/>
    <property type="project" value="GO_Central"/>
</dbReference>
<dbReference type="GO" id="GO:0003924">
    <property type="term" value="F:GTPase activity"/>
    <property type="evidence" value="ECO:0000318"/>
    <property type="project" value="GO_Central"/>
</dbReference>
<dbReference type="GO" id="GO:0007030">
    <property type="term" value="P:Golgi organization"/>
    <property type="evidence" value="ECO:0000250"/>
    <property type="project" value="UniProtKB"/>
</dbReference>
<dbReference type="GO" id="GO:0032482">
    <property type="term" value="P:Rab protein signal transduction"/>
    <property type="evidence" value="ECO:0007669"/>
    <property type="project" value="InterPro"/>
</dbReference>
<dbReference type="GO" id="GO:0016192">
    <property type="term" value="P:vesicle-mediated transport"/>
    <property type="evidence" value="ECO:0000318"/>
    <property type="project" value="GO_Central"/>
</dbReference>
<dbReference type="CDD" id="cd04114">
    <property type="entry name" value="Rab30"/>
    <property type="match status" value="1"/>
</dbReference>
<dbReference type="FunFam" id="3.40.50.300:FF:000440">
    <property type="entry name" value="Ras-related protein Rab-30"/>
    <property type="match status" value="1"/>
</dbReference>
<dbReference type="Gene3D" id="3.40.50.300">
    <property type="entry name" value="P-loop containing nucleotide triphosphate hydrolases"/>
    <property type="match status" value="1"/>
</dbReference>
<dbReference type="InterPro" id="IPR027417">
    <property type="entry name" value="P-loop_NTPase"/>
</dbReference>
<dbReference type="InterPro" id="IPR050227">
    <property type="entry name" value="Rab"/>
</dbReference>
<dbReference type="InterPro" id="IPR041820">
    <property type="entry name" value="Rab30"/>
</dbReference>
<dbReference type="InterPro" id="IPR005225">
    <property type="entry name" value="Small_GTP-bd"/>
</dbReference>
<dbReference type="InterPro" id="IPR001806">
    <property type="entry name" value="Small_GTPase"/>
</dbReference>
<dbReference type="NCBIfam" id="TIGR00231">
    <property type="entry name" value="small_GTP"/>
    <property type="match status" value="1"/>
</dbReference>
<dbReference type="PANTHER" id="PTHR47977">
    <property type="entry name" value="RAS-RELATED PROTEIN RAB"/>
    <property type="match status" value="1"/>
</dbReference>
<dbReference type="Pfam" id="PF00071">
    <property type="entry name" value="Ras"/>
    <property type="match status" value="1"/>
</dbReference>
<dbReference type="PRINTS" id="PR00449">
    <property type="entry name" value="RASTRNSFRMNG"/>
</dbReference>
<dbReference type="SMART" id="SM00175">
    <property type="entry name" value="RAB"/>
    <property type="match status" value="1"/>
</dbReference>
<dbReference type="SMART" id="SM00176">
    <property type="entry name" value="RAN"/>
    <property type="match status" value="1"/>
</dbReference>
<dbReference type="SMART" id="SM00173">
    <property type="entry name" value="RAS"/>
    <property type="match status" value="1"/>
</dbReference>
<dbReference type="SMART" id="SM00174">
    <property type="entry name" value="RHO"/>
    <property type="match status" value="1"/>
</dbReference>
<dbReference type="SUPFAM" id="SSF52540">
    <property type="entry name" value="P-loop containing nucleoside triphosphate hydrolases"/>
    <property type="match status" value="1"/>
</dbReference>
<dbReference type="PROSITE" id="PS51419">
    <property type="entry name" value="RAB"/>
    <property type="match status" value="1"/>
</dbReference>